<comment type="function">
    <text evidence="1">This b-type cytochrome is tightly associated with the reaction center of photosystem II (PSII). PSII is a light-driven water:plastoquinone oxidoreductase that uses light energy to abstract electrons from H(2)O, generating O(2) and a proton gradient subsequently used for ATP formation. It consists of a core antenna complex that captures photons, and an electron transfer chain that converts photonic excitation into a charge separation.</text>
</comment>
<comment type="cofactor">
    <cofactor evidence="1">
        <name>heme b</name>
        <dbReference type="ChEBI" id="CHEBI:60344"/>
    </cofactor>
    <text evidence="1">With its partner (PsbE) binds heme. PSII binds additional chlorophylls, carotenoids and specific lipids.</text>
</comment>
<comment type="subunit">
    <text evidence="1">Heterodimer of an alpha subunit and a beta subunit. PSII is composed of 1 copy each of membrane proteins PsbA, PsbB, PsbC, PsbD, PsbE, PsbF, PsbH, PsbI, PsbJ, PsbK, PsbL, PsbM, PsbT, PsbX, PsbY, PsbZ, Psb30/Ycf12, at least 3 peripheral proteins of the oxygen-evolving complex and a large number of cofactors. It forms dimeric complexes.</text>
</comment>
<comment type="subcellular location">
    <subcellularLocation>
        <location evidence="1">Plastid</location>
        <location evidence="1">Chloroplast thylakoid membrane</location>
        <topology evidence="1">Single-pass membrane protein</topology>
    </subcellularLocation>
</comment>
<comment type="similarity">
    <text evidence="1">Belongs to the PsbE/PsbF family.</text>
</comment>
<feature type="chain" id="PRO_0000200448" description="Cytochrome b559 subunit beta">
    <location>
        <begin position="1"/>
        <end position="39"/>
    </location>
</feature>
<feature type="transmembrane region" description="Helical" evidence="1">
    <location>
        <begin position="14"/>
        <end position="30"/>
    </location>
</feature>
<feature type="binding site" description="axial binding residue" evidence="1">
    <location>
        <position position="18"/>
    </location>
    <ligand>
        <name>heme</name>
        <dbReference type="ChEBI" id="CHEBI:30413"/>
        <note>ligand shared with alpha subunit</note>
    </ligand>
    <ligandPart>
        <name>Fe</name>
        <dbReference type="ChEBI" id="CHEBI:18248"/>
    </ligandPart>
</feature>
<reference key="1">
    <citation type="submission" date="2002-07" db="EMBL/GenBank/DDBJ databases">
        <title>Parsing out signal and noise for seed-plant phylogenetic inference.</title>
        <authorList>
            <person name="Graham S.W."/>
            <person name="Rai H.S."/>
            <person name="Ikegami K."/>
            <person name="Reeves P.A."/>
            <person name="Olmstead R.G."/>
        </authorList>
    </citation>
    <scope>NUCLEOTIDE SEQUENCE [GENOMIC DNA]</scope>
</reference>
<geneLocation type="chloroplast"/>
<organism>
    <name type="scientific">Saruma henryi</name>
    <name type="common">Upright wild ginger</name>
    <dbReference type="NCBI Taxonomy" id="13258"/>
    <lineage>
        <taxon>Eukaryota</taxon>
        <taxon>Viridiplantae</taxon>
        <taxon>Streptophyta</taxon>
        <taxon>Embryophyta</taxon>
        <taxon>Tracheophyta</taxon>
        <taxon>Spermatophyta</taxon>
        <taxon>Magnoliopsida</taxon>
        <taxon>Magnoliidae</taxon>
        <taxon>Piperales</taxon>
        <taxon>Asaraceae</taxon>
        <taxon>Saruma</taxon>
    </lineage>
</organism>
<protein>
    <recommendedName>
        <fullName evidence="1">Cytochrome b559 subunit beta</fullName>
    </recommendedName>
    <alternativeName>
        <fullName evidence="1">PSII reaction center subunit VI</fullName>
    </alternativeName>
</protein>
<keyword id="KW-0150">Chloroplast</keyword>
<keyword id="KW-0249">Electron transport</keyword>
<keyword id="KW-0349">Heme</keyword>
<keyword id="KW-0408">Iron</keyword>
<keyword id="KW-0472">Membrane</keyword>
<keyword id="KW-0479">Metal-binding</keyword>
<keyword id="KW-0602">Photosynthesis</keyword>
<keyword id="KW-0604">Photosystem II</keyword>
<keyword id="KW-0934">Plastid</keyword>
<keyword id="KW-0793">Thylakoid</keyword>
<keyword id="KW-0812">Transmembrane</keyword>
<keyword id="KW-1133">Transmembrane helix</keyword>
<keyword id="KW-0813">Transport</keyword>
<gene>
    <name evidence="1" type="primary">psbF</name>
</gene>
<accession>Q6EYP8</accession>
<name>PSBF_SARHE</name>
<evidence type="ECO:0000255" key="1">
    <source>
        <dbReference type="HAMAP-Rule" id="MF_00643"/>
    </source>
</evidence>
<proteinExistence type="inferred from homology"/>
<sequence>MTIDRTYPIFTVRWLAVHGLAVPTVSFLGSISAMQFIQR</sequence>
<dbReference type="EMBL" id="AF528884">
    <property type="protein sequence ID" value="AAQ09325.1"/>
    <property type="molecule type" value="Genomic_DNA"/>
</dbReference>
<dbReference type="RefSeq" id="YP_009538987.1">
    <property type="nucleotide sequence ID" value="NC_039933.1"/>
</dbReference>
<dbReference type="SMR" id="Q6EYP8"/>
<dbReference type="GeneID" id="38459118"/>
<dbReference type="GO" id="GO:0009535">
    <property type="term" value="C:chloroplast thylakoid membrane"/>
    <property type="evidence" value="ECO:0007669"/>
    <property type="project" value="UniProtKB-SubCell"/>
</dbReference>
<dbReference type="GO" id="GO:0009539">
    <property type="term" value="C:photosystem II reaction center"/>
    <property type="evidence" value="ECO:0007669"/>
    <property type="project" value="InterPro"/>
</dbReference>
<dbReference type="GO" id="GO:0009055">
    <property type="term" value="F:electron transfer activity"/>
    <property type="evidence" value="ECO:0007669"/>
    <property type="project" value="UniProtKB-UniRule"/>
</dbReference>
<dbReference type="GO" id="GO:0020037">
    <property type="term" value="F:heme binding"/>
    <property type="evidence" value="ECO:0007669"/>
    <property type="project" value="InterPro"/>
</dbReference>
<dbReference type="GO" id="GO:0005506">
    <property type="term" value="F:iron ion binding"/>
    <property type="evidence" value="ECO:0007669"/>
    <property type="project" value="UniProtKB-UniRule"/>
</dbReference>
<dbReference type="GO" id="GO:0009767">
    <property type="term" value="P:photosynthetic electron transport chain"/>
    <property type="evidence" value="ECO:0007669"/>
    <property type="project" value="InterPro"/>
</dbReference>
<dbReference type="HAMAP" id="MF_00643">
    <property type="entry name" value="PSII_PsbF"/>
    <property type="match status" value="1"/>
</dbReference>
<dbReference type="InterPro" id="IPR006241">
    <property type="entry name" value="PSII_cyt_b559_bsu"/>
</dbReference>
<dbReference type="InterPro" id="IPR006216">
    <property type="entry name" value="PSII_cyt_b559_CS"/>
</dbReference>
<dbReference type="InterPro" id="IPR013081">
    <property type="entry name" value="PSII_cyt_b559_N"/>
</dbReference>
<dbReference type="NCBIfam" id="TIGR01333">
    <property type="entry name" value="cyt_b559_beta"/>
    <property type="match status" value="1"/>
</dbReference>
<dbReference type="Pfam" id="PF00283">
    <property type="entry name" value="Cytochrom_B559"/>
    <property type="match status" value="1"/>
</dbReference>
<dbReference type="PIRSF" id="PIRSF000037">
    <property type="entry name" value="PsbF"/>
    <property type="match status" value="1"/>
</dbReference>
<dbReference type="SUPFAM" id="SSF161045">
    <property type="entry name" value="Cytochrome b559 subunits"/>
    <property type="match status" value="1"/>
</dbReference>
<dbReference type="PROSITE" id="PS00537">
    <property type="entry name" value="CYTOCHROME_B559"/>
    <property type="match status" value="1"/>
</dbReference>